<gene>
    <name evidence="1" type="primary">trmFO</name>
    <name type="synonym">gid</name>
    <name type="synonym">gidA</name>
    <name type="ordered locus">MXAN_3007</name>
</gene>
<evidence type="ECO:0000255" key="1">
    <source>
        <dbReference type="HAMAP-Rule" id="MF_01037"/>
    </source>
</evidence>
<evidence type="ECO:0000269" key="2">
    <source>
    </source>
</evidence>
<evidence type="ECO:0000305" key="3"/>
<accession>Q9S449</accession>
<accession>Q1D807</accession>
<accession>Q84F98</accession>
<name>TRMFO_MYXXD</name>
<dbReference type="EC" id="2.1.1.74" evidence="1"/>
<dbReference type="EMBL" id="AF162663">
    <property type="protein sequence ID" value="AAD46374.1"/>
    <property type="molecule type" value="Genomic_DNA"/>
</dbReference>
<dbReference type="EMBL" id="AY204472">
    <property type="protein sequence ID" value="AAO22919.1"/>
    <property type="molecule type" value="Genomic_DNA"/>
</dbReference>
<dbReference type="EMBL" id="CP000113">
    <property type="protein sequence ID" value="ABF92331.1"/>
    <property type="molecule type" value="Genomic_DNA"/>
</dbReference>
<dbReference type="RefSeq" id="WP_011553063.1">
    <property type="nucleotide sequence ID" value="NC_008095.1"/>
</dbReference>
<dbReference type="SMR" id="Q9S449"/>
<dbReference type="STRING" id="246197.MXAN_3007"/>
<dbReference type="EnsemblBacteria" id="ABF92331">
    <property type="protein sequence ID" value="ABF92331"/>
    <property type="gene ID" value="MXAN_3007"/>
</dbReference>
<dbReference type="GeneID" id="41360368"/>
<dbReference type="KEGG" id="mxa:MXAN_3007"/>
<dbReference type="eggNOG" id="COG1206">
    <property type="taxonomic scope" value="Bacteria"/>
</dbReference>
<dbReference type="HOGENOM" id="CLU_033057_1_0_7"/>
<dbReference type="OrthoDB" id="9803114at2"/>
<dbReference type="Proteomes" id="UP000002402">
    <property type="component" value="Chromosome"/>
</dbReference>
<dbReference type="GO" id="GO:0005829">
    <property type="term" value="C:cytosol"/>
    <property type="evidence" value="ECO:0007669"/>
    <property type="project" value="TreeGrafter"/>
</dbReference>
<dbReference type="GO" id="GO:0050660">
    <property type="term" value="F:flavin adenine dinucleotide binding"/>
    <property type="evidence" value="ECO:0007669"/>
    <property type="project" value="UniProtKB-UniRule"/>
</dbReference>
<dbReference type="GO" id="GO:0047151">
    <property type="term" value="F:tRNA (uracil(54)-C5)-methyltransferase activity, 5,10-methylenetetrahydrofolate-dependent"/>
    <property type="evidence" value="ECO:0007669"/>
    <property type="project" value="UniProtKB-UniRule"/>
</dbReference>
<dbReference type="GO" id="GO:0030488">
    <property type="term" value="P:tRNA methylation"/>
    <property type="evidence" value="ECO:0007669"/>
    <property type="project" value="TreeGrafter"/>
</dbReference>
<dbReference type="GO" id="GO:0002098">
    <property type="term" value="P:tRNA wobble uridine modification"/>
    <property type="evidence" value="ECO:0007669"/>
    <property type="project" value="TreeGrafter"/>
</dbReference>
<dbReference type="Gene3D" id="3.50.50.60">
    <property type="entry name" value="FAD/NAD(P)-binding domain"/>
    <property type="match status" value="2"/>
</dbReference>
<dbReference type="HAMAP" id="MF_01037">
    <property type="entry name" value="TrmFO"/>
    <property type="match status" value="1"/>
</dbReference>
<dbReference type="InterPro" id="IPR036188">
    <property type="entry name" value="FAD/NAD-bd_sf"/>
</dbReference>
<dbReference type="InterPro" id="IPR002218">
    <property type="entry name" value="MnmG-rel"/>
</dbReference>
<dbReference type="InterPro" id="IPR040131">
    <property type="entry name" value="MnmG_N"/>
</dbReference>
<dbReference type="InterPro" id="IPR004417">
    <property type="entry name" value="TrmFO"/>
</dbReference>
<dbReference type="NCBIfam" id="TIGR00137">
    <property type="entry name" value="gid_trmFO"/>
    <property type="match status" value="1"/>
</dbReference>
<dbReference type="NCBIfam" id="NF003739">
    <property type="entry name" value="PRK05335.1"/>
    <property type="match status" value="1"/>
</dbReference>
<dbReference type="PANTHER" id="PTHR11806">
    <property type="entry name" value="GLUCOSE INHIBITED DIVISION PROTEIN A"/>
    <property type="match status" value="1"/>
</dbReference>
<dbReference type="PANTHER" id="PTHR11806:SF2">
    <property type="entry name" value="METHYLENETETRAHYDROFOLATE--TRNA-(URACIL-5-)-METHYLTRANSFERASE TRMFO"/>
    <property type="match status" value="1"/>
</dbReference>
<dbReference type="Pfam" id="PF01134">
    <property type="entry name" value="GIDA"/>
    <property type="match status" value="1"/>
</dbReference>
<dbReference type="SUPFAM" id="SSF51905">
    <property type="entry name" value="FAD/NAD(P)-binding domain"/>
    <property type="match status" value="1"/>
</dbReference>
<reference key="1">
    <citation type="journal article" date="2000" name="Mol. Microbiol.">
        <title>AglU, a protein required for gliding motility and spore maturation in Myxococcus xanthus, is related to WD-repeat proteins.</title>
        <authorList>
            <person name="White D.J."/>
            <person name="Hartzell P.L."/>
        </authorList>
    </citation>
    <scope>NUCLEOTIDE SEQUENCE [GENOMIC DNA]</scope>
</reference>
<reference key="2">
    <citation type="journal article" date="2003" name="Mol. Microbiol.">
        <title>Identification of genes required for adventurous gliding motility in Myxococcus xanthus with the transposable element mariner.</title>
        <authorList>
            <person name="Youderian P.A."/>
            <person name="Burke N."/>
            <person name="White D.J."/>
            <person name="Hartzell P.L."/>
        </authorList>
    </citation>
    <scope>NUCLEOTIDE SEQUENCE [GENOMIC DNA]</scope>
</reference>
<reference key="3">
    <citation type="journal article" date="2006" name="Proc. Natl. Acad. Sci. U.S.A.">
        <title>Evolution of sensory complexity recorded in a myxobacterial genome.</title>
        <authorList>
            <person name="Goldman B.S."/>
            <person name="Nierman W.C."/>
            <person name="Kaiser D."/>
            <person name="Slater S.C."/>
            <person name="Durkin A.S."/>
            <person name="Eisen J.A."/>
            <person name="Ronning C.M."/>
            <person name="Barbazuk W.B."/>
            <person name="Blanchard M."/>
            <person name="Field C."/>
            <person name="Halling C."/>
            <person name="Hinkle G."/>
            <person name="Iartchuk O."/>
            <person name="Kim H.S."/>
            <person name="Mackenzie C."/>
            <person name="Madupu R."/>
            <person name="Miller N."/>
            <person name="Shvartsbeyn A."/>
            <person name="Sullivan S.A."/>
            <person name="Vaudin M."/>
            <person name="Wiegand R."/>
            <person name="Kaplan H.B."/>
        </authorList>
    </citation>
    <scope>NUCLEOTIDE SEQUENCE [LARGE SCALE GENOMIC DNA]</scope>
    <source>
        <strain>DK1622</strain>
    </source>
</reference>
<reference key="4">
    <citation type="journal article" date="2001" name="Mol. Microbiol.">
        <title>GidA is an FAD-binding protein involved in development of Myxococcus xanthus.</title>
        <authorList>
            <person name="White D.J."/>
            <person name="Merod R."/>
            <person name="Thomasson B."/>
            <person name="Hartzell P.L."/>
        </authorList>
    </citation>
    <scope>FAD-BINDING</scope>
    <scope>SUBCELLULAR LOCATION</scope>
</reference>
<sequence length="457" mass="49764">MADQKQRVTVIGGGLAGTECAYQLSRRGVPVVLREMKPQKRSPAHKSDTLAELVCSNSLRSDNPESAIGLLHAELRALGSLVLSAADANRVPAGDALAVERERFSAAITESLLRQPGVELVAGEVEQLPEDGPVVIATGPLTSDALTRELERHVGTRLYFYDSIAPILSADSIDMNVAFRQSRYGKGGGDDYLNLPMTKDEYYRFIAEVKAGQKVVPHAFEEPKYFEGCLPIEVMAERGDDTLAYGPMKPVGLRDPRTGQEPYAVVQLRMEDVGGTSWNMVGFQTRLTWGEQKRIFSSFIPGLQQAEFLRMGQIHRNTFIDSPRLLAKDLSLKTEPRLYFAGQISGVEGYVESAACGYLVALALHARLTGTEFVPPPATTAMGALLRHVTGEAHPPDYPHQPSNISFGIFSPLTGRMKKAEKRAAYSARAKQDLAAWLPHAGVPAAGAPEHVDQRSA</sequence>
<feature type="chain" id="PRO_0000117253" description="Methylenetetrahydrofolate--tRNA-(uracil-5-)-methyltransferase TrmFO">
    <location>
        <begin position="1"/>
        <end position="457"/>
    </location>
</feature>
<feature type="binding site" evidence="1">
    <location>
        <begin position="12"/>
        <end position="17"/>
    </location>
    <ligand>
        <name>FAD</name>
        <dbReference type="ChEBI" id="CHEBI:57692"/>
    </ligand>
</feature>
<feature type="sequence conflict" description="In Ref. 1; AAD46374." evidence="3" ref="1">
    <original>EQ</original>
    <variation>DE</variation>
    <location>
        <begin position="126"/>
        <end position="127"/>
    </location>
</feature>
<feature type="sequence conflict" description="In Ref. 1; AAD46374." evidence="3" ref="1">
    <original>Y</original>
    <variation>S</variation>
    <location>
        <position position="225"/>
    </location>
</feature>
<feature type="sequence conflict" description="In Ref. 1; AAD46374." evidence="3" ref="1">
    <original>D</original>
    <variation>N</variation>
    <location>
        <position position="241"/>
    </location>
</feature>
<feature type="sequence conflict" description="In Ref. 1; AAD46374." evidence="3" ref="1">
    <original>Q</original>
    <variation>H</variation>
    <location>
        <position position="260"/>
    </location>
</feature>
<feature type="sequence conflict" description="In Ref. 1; AAD46374." evidence="3" ref="1">
    <original>R</original>
    <variation>L</variation>
    <location>
        <position position="269"/>
    </location>
</feature>
<feature type="sequence conflict" description="In Ref. 1; AAD46374." evidence="3" ref="1">
    <original>I</original>
    <variation>M</variation>
    <location>
        <position position="314"/>
    </location>
</feature>
<comment type="function">
    <text evidence="1">Catalyzes the folate-dependent formation of 5-methyl-uridine at position 54 (M-5-U54) in all tRNAs.</text>
</comment>
<comment type="catalytic activity">
    <reaction evidence="1">
        <text>uridine(54) in tRNA + (6R)-5,10-methylene-5,6,7,8-tetrahydrofolate + NADH + H(+) = 5-methyluridine(54) in tRNA + (6S)-5,6,7,8-tetrahydrofolate + NAD(+)</text>
        <dbReference type="Rhea" id="RHEA:16873"/>
        <dbReference type="Rhea" id="RHEA-COMP:10167"/>
        <dbReference type="Rhea" id="RHEA-COMP:10193"/>
        <dbReference type="ChEBI" id="CHEBI:15378"/>
        <dbReference type="ChEBI" id="CHEBI:15636"/>
        <dbReference type="ChEBI" id="CHEBI:57453"/>
        <dbReference type="ChEBI" id="CHEBI:57540"/>
        <dbReference type="ChEBI" id="CHEBI:57945"/>
        <dbReference type="ChEBI" id="CHEBI:65315"/>
        <dbReference type="ChEBI" id="CHEBI:74447"/>
        <dbReference type="EC" id="2.1.1.74"/>
    </reaction>
</comment>
<comment type="catalytic activity">
    <reaction evidence="1">
        <text>uridine(54) in tRNA + (6R)-5,10-methylene-5,6,7,8-tetrahydrofolate + NADPH + H(+) = 5-methyluridine(54) in tRNA + (6S)-5,6,7,8-tetrahydrofolate + NADP(+)</text>
        <dbReference type="Rhea" id="RHEA:62372"/>
        <dbReference type="Rhea" id="RHEA-COMP:10167"/>
        <dbReference type="Rhea" id="RHEA-COMP:10193"/>
        <dbReference type="ChEBI" id="CHEBI:15378"/>
        <dbReference type="ChEBI" id="CHEBI:15636"/>
        <dbReference type="ChEBI" id="CHEBI:57453"/>
        <dbReference type="ChEBI" id="CHEBI:57783"/>
        <dbReference type="ChEBI" id="CHEBI:58349"/>
        <dbReference type="ChEBI" id="CHEBI:65315"/>
        <dbReference type="ChEBI" id="CHEBI:74447"/>
        <dbReference type="EC" id="2.1.1.74"/>
    </reaction>
</comment>
<comment type="cofactor">
    <cofactor evidence="1 2">
        <name>FAD</name>
        <dbReference type="ChEBI" id="CHEBI:57692"/>
    </cofactor>
</comment>
<comment type="subcellular location">
    <subcellularLocation>
        <location evidence="1 2">Cytoplasm</location>
    </subcellularLocation>
</comment>
<comment type="similarity">
    <text evidence="1">Belongs to the MnmG family. TrmFO subfamily.</text>
</comment>
<keyword id="KW-0963">Cytoplasm</keyword>
<keyword id="KW-0274">FAD</keyword>
<keyword id="KW-0285">Flavoprotein</keyword>
<keyword id="KW-0489">Methyltransferase</keyword>
<keyword id="KW-0520">NAD</keyword>
<keyword id="KW-0521">NADP</keyword>
<keyword id="KW-1185">Reference proteome</keyword>
<keyword id="KW-0808">Transferase</keyword>
<keyword id="KW-0819">tRNA processing</keyword>
<protein>
    <recommendedName>
        <fullName evidence="1">Methylenetetrahydrofolate--tRNA-(uracil-5-)-methyltransferase TrmFO</fullName>
        <ecNumber evidence="1">2.1.1.74</ecNumber>
    </recommendedName>
    <alternativeName>
        <fullName evidence="1">Folate-dependent tRNA (uracil-5-)-methyltransferase</fullName>
    </alternativeName>
    <alternativeName>
        <fullName evidence="1">Folate-dependent tRNA(M-5-U54)-methyltransferase</fullName>
    </alternativeName>
</protein>
<proteinExistence type="evidence at protein level"/>
<organism>
    <name type="scientific">Myxococcus xanthus (strain DK1622)</name>
    <dbReference type="NCBI Taxonomy" id="246197"/>
    <lineage>
        <taxon>Bacteria</taxon>
        <taxon>Pseudomonadati</taxon>
        <taxon>Myxococcota</taxon>
        <taxon>Myxococcia</taxon>
        <taxon>Myxococcales</taxon>
        <taxon>Cystobacterineae</taxon>
        <taxon>Myxococcaceae</taxon>
        <taxon>Myxococcus</taxon>
    </lineage>
</organism>